<dbReference type="EMBL" id="BX842652">
    <property type="protein sequence ID" value="CAE80135.1"/>
    <property type="molecule type" value="Genomic_DNA"/>
</dbReference>
<dbReference type="RefSeq" id="WP_011164737.1">
    <property type="nucleotide sequence ID" value="NC_005363.1"/>
</dbReference>
<dbReference type="SMR" id="Q6MKS2"/>
<dbReference type="STRING" id="264462.Bd2311"/>
<dbReference type="GeneID" id="93013239"/>
<dbReference type="KEGG" id="bba:Bd2311"/>
<dbReference type="eggNOG" id="COG0322">
    <property type="taxonomic scope" value="Bacteria"/>
</dbReference>
<dbReference type="HOGENOM" id="CLU_014841_3_2_7"/>
<dbReference type="Proteomes" id="UP000008080">
    <property type="component" value="Chromosome"/>
</dbReference>
<dbReference type="GO" id="GO:0005737">
    <property type="term" value="C:cytoplasm"/>
    <property type="evidence" value="ECO:0007669"/>
    <property type="project" value="UniProtKB-SubCell"/>
</dbReference>
<dbReference type="GO" id="GO:0009380">
    <property type="term" value="C:excinuclease repair complex"/>
    <property type="evidence" value="ECO:0007669"/>
    <property type="project" value="InterPro"/>
</dbReference>
<dbReference type="GO" id="GO:0003677">
    <property type="term" value="F:DNA binding"/>
    <property type="evidence" value="ECO:0007669"/>
    <property type="project" value="UniProtKB-UniRule"/>
</dbReference>
<dbReference type="GO" id="GO:0009381">
    <property type="term" value="F:excinuclease ABC activity"/>
    <property type="evidence" value="ECO:0007669"/>
    <property type="project" value="UniProtKB-UniRule"/>
</dbReference>
<dbReference type="GO" id="GO:0006289">
    <property type="term" value="P:nucleotide-excision repair"/>
    <property type="evidence" value="ECO:0007669"/>
    <property type="project" value="UniProtKB-UniRule"/>
</dbReference>
<dbReference type="GO" id="GO:0009432">
    <property type="term" value="P:SOS response"/>
    <property type="evidence" value="ECO:0007669"/>
    <property type="project" value="UniProtKB-UniRule"/>
</dbReference>
<dbReference type="CDD" id="cd10434">
    <property type="entry name" value="GIY-YIG_UvrC_Cho"/>
    <property type="match status" value="1"/>
</dbReference>
<dbReference type="FunFam" id="3.40.1440.10:FF:000001">
    <property type="entry name" value="UvrABC system protein C"/>
    <property type="match status" value="1"/>
</dbReference>
<dbReference type="Gene3D" id="1.10.150.20">
    <property type="entry name" value="5' to 3' exonuclease, C-terminal subdomain"/>
    <property type="match status" value="1"/>
</dbReference>
<dbReference type="Gene3D" id="3.40.1440.10">
    <property type="entry name" value="GIY-YIG endonuclease"/>
    <property type="match status" value="1"/>
</dbReference>
<dbReference type="Gene3D" id="4.10.860.10">
    <property type="entry name" value="UVR domain"/>
    <property type="match status" value="1"/>
</dbReference>
<dbReference type="Gene3D" id="3.30.420.340">
    <property type="entry name" value="UvrC, RNAse H endonuclease domain"/>
    <property type="match status" value="1"/>
</dbReference>
<dbReference type="HAMAP" id="MF_00203">
    <property type="entry name" value="UvrC"/>
    <property type="match status" value="1"/>
</dbReference>
<dbReference type="InterPro" id="IPR000305">
    <property type="entry name" value="GIY-YIG_endonuc"/>
</dbReference>
<dbReference type="InterPro" id="IPR035901">
    <property type="entry name" value="GIY-YIG_endonuc_sf"/>
</dbReference>
<dbReference type="InterPro" id="IPR047296">
    <property type="entry name" value="GIY-YIG_UvrC_Cho"/>
</dbReference>
<dbReference type="InterPro" id="IPR010994">
    <property type="entry name" value="RuvA_2-like"/>
</dbReference>
<dbReference type="InterPro" id="IPR001943">
    <property type="entry name" value="UVR_dom"/>
</dbReference>
<dbReference type="InterPro" id="IPR036876">
    <property type="entry name" value="UVR_dom_sf"/>
</dbReference>
<dbReference type="InterPro" id="IPR050066">
    <property type="entry name" value="UvrABC_protein_C"/>
</dbReference>
<dbReference type="InterPro" id="IPR004791">
    <property type="entry name" value="UvrC"/>
</dbReference>
<dbReference type="InterPro" id="IPR001162">
    <property type="entry name" value="UvrC_RNase_H_dom"/>
</dbReference>
<dbReference type="InterPro" id="IPR038476">
    <property type="entry name" value="UvrC_RNase_H_dom_sf"/>
</dbReference>
<dbReference type="NCBIfam" id="NF001824">
    <property type="entry name" value="PRK00558.1-5"/>
    <property type="match status" value="1"/>
</dbReference>
<dbReference type="NCBIfam" id="TIGR00194">
    <property type="entry name" value="uvrC"/>
    <property type="match status" value="1"/>
</dbReference>
<dbReference type="PANTHER" id="PTHR30562:SF1">
    <property type="entry name" value="UVRABC SYSTEM PROTEIN C"/>
    <property type="match status" value="1"/>
</dbReference>
<dbReference type="PANTHER" id="PTHR30562">
    <property type="entry name" value="UVRC/OXIDOREDUCTASE"/>
    <property type="match status" value="1"/>
</dbReference>
<dbReference type="Pfam" id="PF01541">
    <property type="entry name" value="GIY-YIG"/>
    <property type="match status" value="1"/>
</dbReference>
<dbReference type="Pfam" id="PF14520">
    <property type="entry name" value="HHH_5"/>
    <property type="match status" value="1"/>
</dbReference>
<dbReference type="Pfam" id="PF02151">
    <property type="entry name" value="UVR"/>
    <property type="match status" value="1"/>
</dbReference>
<dbReference type="Pfam" id="PF22920">
    <property type="entry name" value="UvrC_RNaseH"/>
    <property type="match status" value="1"/>
</dbReference>
<dbReference type="Pfam" id="PF08459">
    <property type="entry name" value="UvrC_RNaseH_dom"/>
    <property type="match status" value="1"/>
</dbReference>
<dbReference type="SMART" id="SM00465">
    <property type="entry name" value="GIYc"/>
    <property type="match status" value="1"/>
</dbReference>
<dbReference type="SUPFAM" id="SSF46600">
    <property type="entry name" value="C-terminal UvrC-binding domain of UvrB"/>
    <property type="match status" value="1"/>
</dbReference>
<dbReference type="SUPFAM" id="SSF82771">
    <property type="entry name" value="GIY-YIG endonuclease"/>
    <property type="match status" value="1"/>
</dbReference>
<dbReference type="SUPFAM" id="SSF47781">
    <property type="entry name" value="RuvA domain 2-like"/>
    <property type="match status" value="1"/>
</dbReference>
<dbReference type="PROSITE" id="PS50164">
    <property type="entry name" value="GIY_YIG"/>
    <property type="match status" value="1"/>
</dbReference>
<dbReference type="PROSITE" id="PS50151">
    <property type="entry name" value="UVR"/>
    <property type="match status" value="1"/>
</dbReference>
<dbReference type="PROSITE" id="PS50165">
    <property type="entry name" value="UVRC"/>
    <property type="match status" value="1"/>
</dbReference>
<proteinExistence type="inferred from homology"/>
<gene>
    <name evidence="1" type="primary">uvrC</name>
    <name type="ordered locus">Bd2311</name>
</gene>
<name>UVRC_BDEBA</name>
<protein>
    <recommendedName>
        <fullName evidence="1">UvrABC system protein C</fullName>
        <shortName evidence="1">Protein UvrC</shortName>
    </recommendedName>
    <alternativeName>
        <fullName evidence="1">Excinuclease ABC subunit C</fullName>
    </alternativeName>
</protein>
<evidence type="ECO:0000255" key="1">
    <source>
        <dbReference type="HAMAP-Rule" id="MF_00203"/>
    </source>
</evidence>
<sequence>MASSKFEEVRDKVKEFPTQSGVYLMKNTADKIIYIGKAKNLRNRVRSYFNDSKDHSPKTRLLVSNICEVEYILTKTEVEAFLLEASLIKKHRPKYNIRLRDDKAYPYIRFSWGDQAPRLYLARKVKKDGSLYFGPYTSGLAVHGTIKFLNRTFKIRDCTDAVFKSRTRPCMTYQIGRCTAPCVKYITMEDYRNEVEGAKLFLKGQNKKVIKSMTEKMMGAADEEKFEVAARLRDSIEAIKAILQKQAVINDTSEKDQDALGYYGDERGCLIETVHIRAGRVIGTRPHYLPHFDPNDAVEDPREWLVDFLNQYYEDNFIPDEVLLPLDIGNDLTKLMEEVLKERSGSKTTVRFATDERGRNLVDMAHENAKSHFLKYVSKSEEKLRGLEEIKERFNLPERPRRIECYDISTFQGAETVASQVVFEDGVPAKEHYRRYKIKTVQGINDFASMYEVLSRRFKHTEYDDPQLIVIDGGKGQLSQAMKILEEIGRKDIPVVGLAKARTESDFQKQEVESTEERFFLPGRSNPVIFKHNAEALYILSGIRDEAHRFAITYHRKLREGTSLESELDYVVGLGEKRKKVLLTQFNSIDEIKMADPEEIAKLKGFNRVLAERILLQLNESEEEETEVEE</sequence>
<keyword id="KW-0963">Cytoplasm</keyword>
<keyword id="KW-0227">DNA damage</keyword>
<keyword id="KW-0228">DNA excision</keyword>
<keyword id="KW-0234">DNA repair</keyword>
<keyword id="KW-0267">Excision nuclease</keyword>
<keyword id="KW-1185">Reference proteome</keyword>
<keyword id="KW-0742">SOS response</keyword>
<organism>
    <name type="scientific">Bdellovibrio bacteriovorus (strain ATCC 15356 / DSM 50701 / NCIMB 9529 / HD100)</name>
    <dbReference type="NCBI Taxonomy" id="264462"/>
    <lineage>
        <taxon>Bacteria</taxon>
        <taxon>Pseudomonadati</taxon>
        <taxon>Bdellovibrionota</taxon>
        <taxon>Bdellovibrionia</taxon>
        <taxon>Bdellovibrionales</taxon>
        <taxon>Pseudobdellovibrionaceae</taxon>
        <taxon>Bdellovibrio</taxon>
    </lineage>
</organism>
<reference key="1">
    <citation type="journal article" date="2004" name="Science">
        <title>A predator unmasked: life cycle of Bdellovibrio bacteriovorus from a genomic perspective.</title>
        <authorList>
            <person name="Rendulic S."/>
            <person name="Jagtap P."/>
            <person name="Rosinus A."/>
            <person name="Eppinger M."/>
            <person name="Baar C."/>
            <person name="Lanz C."/>
            <person name="Keller H."/>
            <person name="Lambert C."/>
            <person name="Evans K.J."/>
            <person name="Goesmann A."/>
            <person name="Meyer F."/>
            <person name="Sockett R.E."/>
            <person name="Schuster S.C."/>
        </authorList>
    </citation>
    <scope>NUCLEOTIDE SEQUENCE [LARGE SCALE GENOMIC DNA]</scope>
    <source>
        <strain>ATCC 15356 / DSM 50701 / NCIMB 9529 / HD100</strain>
    </source>
</reference>
<comment type="function">
    <text evidence="1">The UvrABC repair system catalyzes the recognition and processing of DNA lesions. UvrC both incises the 5' and 3' sides of the lesion. The N-terminal half is responsible for the 3' incision and the C-terminal half is responsible for the 5' incision.</text>
</comment>
<comment type="subunit">
    <text evidence="1">Interacts with UvrB in an incision complex.</text>
</comment>
<comment type="subcellular location">
    <subcellularLocation>
        <location evidence="1">Cytoplasm</location>
    </subcellularLocation>
</comment>
<comment type="similarity">
    <text evidence="1">Belongs to the UvrC family.</text>
</comment>
<accession>Q6MKS2</accession>
<feature type="chain" id="PRO_0000227403" description="UvrABC system protein C">
    <location>
        <begin position="1"/>
        <end position="630"/>
    </location>
</feature>
<feature type="domain" description="GIY-YIG" evidence="1">
    <location>
        <begin position="18"/>
        <end position="97"/>
    </location>
</feature>
<feature type="domain" description="UVR" evidence="1">
    <location>
        <begin position="207"/>
        <end position="242"/>
    </location>
</feature>